<keyword id="KW-0028">Amino-acid biosynthesis</keyword>
<keyword id="KW-0057">Aromatic amino acid biosynthesis</keyword>
<keyword id="KW-0274">FAD</keyword>
<keyword id="KW-0285">Flavoprotein</keyword>
<keyword id="KW-0288">FMN</keyword>
<keyword id="KW-0456">Lyase</keyword>
<keyword id="KW-0521">NADP</keyword>
<dbReference type="EC" id="4.2.3.5" evidence="1"/>
<dbReference type="EMBL" id="CP000789">
    <property type="protein sequence ID" value="ABU72063.1"/>
    <property type="status" value="ALT_INIT"/>
    <property type="molecule type" value="Genomic_DNA"/>
</dbReference>
<dbReference type="RefSeq" id="WP_041853296.1">
    <property type="nucleotide sequence ID" value="NC_009783.1"/>
</dbReference>
<dbReference type="SMR" id="A7MS71"/>
<dbReference type="KEGG" id="vha:VIBHAR_03114"/>
<dbReference type="PATRIC" id="fig|338187.36.peg.3042"/>
<dbReference type="UniPathway" id="UPA00053">
    <property type="reaction ID" value="UER00090"/>
</dbReference>
<dbReference type="Proteomes" id="UP000008152">
    <property type="component" value="Chromosome I"/>
</dbReference>
<dbReference type="GO" id="GO:0005829">
    <property type="term" value="C:cytosol"/>
    <property type="evidence" value="ECO:0007669"/>
    <property type="project" value="TreeGrafter"/>
</dbReference>
<dbReference type="GO" id="GO:0004107">
    <property type="term" value="F:chorismate synthase activity"/>
    <property type="evidence" value="ECO:0007669"/>
    <property type="project" value="UniProtKB-UniRule"/>
</dbReference>
<dbReference type="GO" id="GO:0010181">
    <property type="term" value="F:FMN binding"/>
    <property type="evidence" value="ECO:0007669"/>
    <property type="project" value="TreeGrafter"/>
</dbReference>
<dbReference type="GO" id="GO:0008652">
    <property type="term" value="P:amino acid biosynthetic process"/>
    <property type="evidence" value="ECO:0007669"/>
    <property type="project" value="UniProtKB-KW"/>
</dbReference>
<dbReference type="GO" id="GO:0009073">
    <property type="term" value="P:aromatic amino acid family biosynthetic process"/>
    <property type="evidence" value="ECO:0007669"/>
    <property type="project" value="UniProtKB-KW"/>
</dbReference>
<dbReference type="GO" id="GO:0009423">
    <property type="term" value="P:chorismate biosynthetic process"/>
    <property type="evidence" value="ECO:0007669"/>
    <property type="project" value="UniProtKB-UniRule"/>
</dbReference>
<dbReference type="CDD" id="cd07304">
    <property type="entry name" value="Chorismate_synthase"/>
    <property type="match status" value="1"/>
</dbReference>
<dbReference type="FunFam" id="3.60.150.10:FF:000001">
    <property type="entry name" value="Chorismate synthase"/>
    <property type="match status" value="1"/>
</dbReference>
<dbReference type="Gene3D" id="3.60.150.10">
    <property type="entry name" value="Chorismate synthase AroC"/>
    <property type="match status" value="1"/>
</dbReference>
<dbReference type="HAMAP" id="MF_00300">
    <property type="entry name" value="Chorismate_synth"/>
    <property type="match status" value="1"/>
</dbReference>
<dbReference type="InterPro" id="IPR000453">
    <property type="entry name" value="Chorismate_synth"/>
</dbReference>
<dbReference type="InterPro" id="IPR035904">
    <property type="entry name" value="Chorismate_synth_AroC_sf"/>
</dbReference>
<dbReference type="InterPro" id="IPR020541">
    <property type="entry name" value="Chorismate_synthase_CS"/>
</dbReference>
<dbReference type="NCBIfam" id="TIGR00033">
    <property type="entry name" value="aroC"/>
    <property type="match status" value="1"/>
</dbReference>
<dbReference type="NCBIfam" id="NF003793">
    <property type="entry name" value="PRK05382.1"/>
    <property type="match status" value="1"/>
</dbReference>
<dbReference type="PANTHER" id="PTHR21085">
    <property type="entry name" value="CHORISMATE SYNTHASE"/>
    <property type="match status" value="1"/>
</dbReference>
<dbReference type="PANTHER" id="PTHR21085:SF0">
    <property type="entry name" value="CHORISMATE SYNTHASE"/>
    <property type="match status" value="1"/>
</dbReference>
<dbReference type="Pfam" id="PF01264">
    <property type="entry name" value="Chorismate_synt"/>
    <property type="match status" value="1"/>
</dbReference>
<dbReference type="PIRSF" id="PIRSF001456">
    <property type="entry name" value="Chorismate_synth"/>
    <property type="match status" value="1"/>
</dbReference>
<dbReference type="SUPFAM" id="SSF103263">
    <property type="entry name" value="Chorismate synthase, AroC"/>
    <property type="match status" value="1"/>
</dbReference>
<dbReference type="PROSITE" id="PS00787">
    <property type="entry name" value="CHORISMATE_SYNTHASE_1"/>
    <property type="match status" value="1"/>
</dbReference>
<dbReference type="PROSITE" id="PS00788">
    <property type="entry name" value="CHORISMATE_SYNTHASE_2"/>
    <property type="match status" value="1"/>
</dbReference>
<dbReference type="PROSITE" id="PS00789">
    <property type="entry name" value="CHORISMATE_SYNTHASE_3"/>
    <property type="match status" value="1"/>
</dbReference>
<accession>A7MS71</accession>
<proteinExistence type="inferred from homology"/>
<organism>
    <name type="scientific">Vibrio campbellii (strain ATCC BAA-1116)</name>
    <dbReference type="NCBI Taxonomy" id="2902295"/>
    <lineage>
        <taxon>Bacteria</taxon>
        <taxon>Pseudomonadati</taxon>
        <taxon>Pseudomonadota</taxon>
        <taxon>Gammaproteobacteria</taxon>
        <taxon>Vibrionales</taxon>
        <taxon>Vibrionaceae</taxon>
        <taxon>Vibrio</taxon>
    </lineage>
</organism>
<name>AROC_VIBC1</name>
<reference key="1">
    <citation type="submission" date="2007-08" db="EMBL/GenBank/DDBJ databases">
        <authorList>
            <consortium name="The Vibrio harveyi Genome Sequencing Project"/>
            <person name="Bassler B."/>
            <person name="Clifton S.W."/>
            <person name="Fulton L."/>
            <person name="Delehaunty K."/>
            <person name="Fronick C."/>
            <person name="Harrison M."/>
            <person name="Markivic C."/>
            <person name="Fulton R."/>
            <person name="Tin-Wollam A.-M."/>
            <person name="Shah N."/>
            <person name="Pepin K."/>
            <person name="Nash W."/>
            <person name="Thiruvilangam P."/>
            <person name="Bhonagiri V."/>
            <person name="Waters C."/>
            <person name="Tu K.C."/>
            <person name="Irgon J."/>
            <person name="Wilson R.K."/>
        </authorList>
    </citation>
    <scope>NUCLEOTIDE SEQUENCE [LARGE SCALE GENOMIC DNA]</scope>
    <source>
        <strain>ATCC BAA-1116 / BB120</strain>
    </source>
</reference>
<protein>
    <recommendedName>
        <fullName evidence="1">Chorismate synthase</fullName>
        <shortName evidence="1">CS</shortName>
        <ecNumber evidence="1">4.2.3.5</ecNumber>
    </recommendedName>
    <alternativeName>
        <fullName evidence="1">5-enolpyruvylshikimate-3-phosphate phospholyase</fullName>
    </alternativeName>
</protein>
<comment type="function">
    <text evidence="1">Catalyzes the anti-1,4-elimination of the C-3 phosphate and the C-6 proR hydrogen from 5-enolpyruvylshikimate-3-phosphate (EPSP) to yield chorismate, which is the branch point compound that serves as the starting substrate for the three terminal pathways of aromatic amino acid biosynthesis. This reaction introduces a second double bond into the aromatic ring system.</text>
</comment>
<comment type="catalytic activity">
    <reaction evidence="1">
        <text>5-O-(1-carboxyvinyl)-3-phosphoshikimate = chorismate + phosphate</text>
        <dbReference type="Rhea" id="RHEA:21020"/>
        <dbReference type="ChEBI" id="CHEBI:29748"/>
        <dbReference type="ChEBI" id="CHEBI:43474"/>
        <dbReference type="ChEBI" id="CHEBI:57701"/>
        <dbReference type="EC" id="4.2.3.5"/>
    </reaction>
</comment>
<comment type="cofactor">
    <cofactor evidence="1">
        <name>FMNH2</name>
        <dbReference type="ChEBI" id="CHEBI:57618"/>
    </cofactor>
    <text evidence="1">Reduced FMN (FMNH(2)).</text>
</comment>
<comment type="pathway">
    <text evidence="1">Metabolic intermediate biosynthesis; chorismate biosynthesis; chorismate from D-erythrose 4-phosphate and phosphoenolpyruvate: step 7/7.</text>
</comment>
<comment type="subunit">
    <text evidence="1">Homotetramer.</text>
</comment>
<comment type="similarity">
    <text evidence="1">Belongs to the chorismate synthase family.</text>
</comment>
<comment type="sequence caution" evidence="2">
    <conflict type="erroneous initiation">
        <sequence resource="EMBL-CDS" id="ABU72063"/>
    </conflict>
    <text>Extended N-terminus.</text>
</comment>
<feature type="chain" id="PRO_0000322430" description="Chorismate synthase">
    <location>
        <begin position="1"/>
        <end position="361"/>
    </location>
</feature>
<feature type="binding site" evidence="1">
    <location>
        <position position="48"/>
    </location>
    <ligand>
        <name>NADP(+)</name>
        <dbReference type="ChEBI" id="CHEBI:58349"/>
    </ligand>
</feature>
<feature type="binding site" evidence="1">
    <location>
        <position position="54"/>
    </location>
    <ligand>
        <name>NADP(+)</name>
        <dbReference type="ChEBI" id="CHEBI:58349"/>
    </ligand>
</feature>
<feature type="binding site" evidence="1">
    <location>
        <begin position="125"/>
        <end position="127"/>
    </location>
    <ligand>
        <name>FMN</name>
        <dbReference type="ChEBI" id="CHEBI:58210"/>
    </ligand>
</feature>
<feature type="binding site" evidence="1">
    <location>
        <begin position="238"/>
        <end position="239"/>
    </location>
    <ligand>
        <name>FMN</name>
        <dbReference type="ChEBI" id="CHEBI:58210"/>
    </ligand>
</feature>
<feature type="binding site" evidence="1">
    <location>
        <position position="278"/>
    </location>
    <ligand>
        <name>FMN</name>
        <dbReference type="ChEBI" id="CHEBI:58210"/>
    </ligand>
</feature>
<feature type="binding site" evidence="1">
    <location>
        <begin position="293"/>
        <end position="297"/>
    </location>
    <ligand>
        <name>FMN</name>
        <dbReference type="ChEBI" id="CHEBI:58210"/>
    </ligand>
</feature>
<feature type="binding site" evidence="1">
    <location>
        <position position="319"/>
    </location>
    <ligand>
        <name>FMN</name>
        <dbReference type="ChEBI" id="CHEBI:58210"/>
    </ligand>
</feature>
<gene>
    <name evidence="1" type="primary">aroC</name>
    <name type="ordered locus">VIBHAR_03114</name>
</gene>
<evidence type="ECO:0000255" key="1">
    <source>
        <dbReference type="HAMAP-Rule" id="MF_00300"/>
    </source>
</evidence>
<evidence type="ECO:0000305" key="2"/>
<sequence>MAGNSIGQHFRVTTFGESHGIALGCIVDGCPPGLEITEADLQTDLDRRRPGTSRYTTQRREPDEVKILSGVFEGQTTGTSIGLMIENTDQRSKDYSDIKDKFRPGHADYTYHQKYGVRDYRGGGRSSARETAMRVAAGAIAKKYLKDEFGVEIRAYLSQMGDVSIDKVDWNEIENNAFFCPDADKVEAFDQLIRDLKKEGDSIGAKIQVVATNVPVGLGEPVFDRLDADIAHALMSINAVKGVEIGDGFDVVNQKGSDHRDTLSPEGFGSNHAGGILGGISTGQEIVANIALKPTSSITVPGETITKEGEPTQLITKGRHDPCVGIRAVPIAEAMLAIVVMDHLLRHRGQNHGVKTETPKI</sequence>